<sequence>MKTSIFKSLYFQVLAAITIGILLGHFYPQLGEQMKPLGDGFVKLIKMIIAPVIFCTVVTGIAGMESMKSVGRTGAAALLYFEVVSTIALIIGLVVVNVVQPGVGMNIDPSTLDASAVAVYTQQASQQGLIPFLMDVIPASVVGAFASGNILQVLLFAVMFGFALHRLGPKGKVIFDVIESFSKVIFGVINMIMKLAPLGAFGAMAFTIGKYGVGTLVQLGQLILCFYLTCILFVFLVLGSIAKATGFSIFKFIRYIREELLIVLGTSSSESVLPRMLEKMEKVGCKKSVVGLVIPTGYSFNLDGTSIYLTMAAVFIAQATNSHMDIWHQITLLVVLLLSSKGAAGVTGSGFIVLAATLSAVGHLPVAGLALILGIDRFMSEARALTNLIGNGVATIVVAKYCRELDEKKLDAELSGNNKNDNAATPTAQS</sequence>
<protein>
    <recommendedName>
        <fullName evidence="1">C4-dicarboxylate transport protein</fullName>
    </recommendedName>
</protein>
<gene>
    <name evidence="1" type="primary">dctA</name>
    <name type="ordered locus">ECA4362</name>
</gene>
<feature type="chain" id="PRO_1000067450" description="C4-dicarboxylate transport protein">
    <location>
        <begin position="1"/>
        <end position="430"/>
    </location>
</feature>
<feature type="transmembrane region" description="Helical" evidence="1">
    <location>
        <begin position="8"/>
        <end position="28"/>
    </location>
</feature>
<feature type="transmembrane region" description="Helical" evidence="1">
    <location>
        <begin position="44"/>
        <end position="64"/>
    </location>
</feature>
<feature type="transmembrane region" description="Helical" evidence="1">
    <location>
        <begin position="76"/>
        <end position="96"/>
    </location>
</feature>
<feature type="transmembrane region" description="Helical" evidence="1">
    <location>
        <begin position="144"/>
        <end position="164"/>
    </location>
</feature>
<feature type="transmembrane region" description="Helical" evidence="1">
    <location>
        <begin position="184"/>
        <end position="204"/>
    </location>
</feature>
<feature type="transmembrane region" description="Helical" evidence="1">
    <location>
        <begin position="222"/>
        <end position="242"/>
    </location>
</feature>
<feature type="transmembrane region" description="Helical" evidence="1">
    <location>
        <begin position="289"/>
        <end position="309"/>
    </location>
</feature>
<feature type="transmembrane region" description="Helical" evidence="1">
    <location>
        <begin position="326"/>
        <end position="346"/>
    </location>
</feature>
<feature type="transmembrane region" description="Helical" evidence="1">
    <location>
        <begin position="352"/>
        <end position="372"/>
    </location>
</feature>
<dbReference type="EMBL" id="BX950851">
    <property type="protein sequence ID" value="CAG77259.1"/>
    <property type="molecule type" value="Genomic_DNA"/>
</dbReference>
<dbReference type="RefSeq" id="WP_011095825.1">
    <property type="nucleotide sequence ID" value="NC_004547.2"/>
</dbReference>
<dbReference type="SMR" id="Q6CYZ1"/>
<dbReference type="STRING" id="218491.ECA4362"/>
<dbReference type="KEGG" id="eca:ECA4362"/>
<dbReference type="PATRIC" id="fig|218491.5.peg.4445"/>
<dbReference type="eggNOG" id="COG1301">
    <property type="taxonomic scope" value="Bacteria"/>
</dbReference>
<dbReference type="HOGENOM" id="CLU_019375_7_0_6"/>
<dbReference type="OrthoDB" id="9766690at2"/>
<dbReference type="Proteomes" id="UP000007966">
    <property type="component" value="Chromosome"/>
</dbReference>
<dbReference type="GO" id="GO:0005886">
    <property type="term" value="C:plasma membrane"/>
    <property type="evidence" value="ECO:0007669"/>
    <property type="project" value="UniProtKB-SubCell"/>
</dbReference>
<dbReference type="GO" id="GO:0015138">
    <property type="term" value="F:fumarate transmembrane transporter activity"/>
    <property type="evidence" value="ECO:0007669"/>
    <property type="project" value="TreeGrafter"/>
</dbReference>
<dbReference type="GO" id="GO:0015366">
    <property type="term" value="F:malate:proton symporter activity"/>
    <property type="evidence" value="ECO:0007669"/>
    <property type="project" value="TreeGrafter"/>
</dbReference>
<dbReference type="GO" id="GO:0015141">
    <property type="term" value="F:succinate transmembrane transporter activity"/>
    <property type="evidence" value="ECO:0007669"/>
    <property type="project" value="TreeGrafter"/>
</dbReference>
<dbReference type="GO" id="GO:0070778">
    <property type="term" value="P:L-aspartate transmembrane transport"/>
    <property type="evidence" value="ECO:0007669"/>
    <property type="project" value="TreeGrafter"/>
</dbReference>
<dbReference type="FunFam" id="1.10.3860.10:FF:000001">
    <property type="entry name" value="C4-dicarboxylate transport protein"/>
    <property type="match status" value="1"/>
</dbReference>
<dbReference type="Gene3D" id="1.10.3860.10">
    <property type="entry name" value="Sodium:dicarboxylate symporter"/>
    <property type="match status" value="1"/>
</dbReference>
<dbReference type="HAMAP" id="MF_01300">
    <property type="entry name" value="C4_dicarb_transport"/>
    <property type="match status" value="1"/>
</dbReference>
<dbReference type="InterPro" id="IPR023954">
    <property type="entry name" value="C4_dicarb_transport"/>
</dbReference>
<dbReference type="InterPro" id="IPR001991">
    <property type="entry name" value="Na-dicarboxylate_symporter"/>
</dbReference>
<dbReference type="InterPro" id="IPR018107">
    <property type="entry name" value="Na-dicarboxylate_symporter_CS"/>
</dbReference>
<dbReference type="InterPro" id="IPR036458">
    <property type="entry name" value="Na:dicarbo_symporter_sf"/>
</dbReference>
<dbReference type="NCBIfam" id="NF002461">
    <property type="entry name" value="PRK01663.1"/>
    <property type="match status" value="1"/>
</dbReference>
<dbReference type="NCBIfam" id="NF009587">
    <property type="entry name" value="PRK13027.1"/>
    <property type="match status" value="1"/>
</dbReference>
<dbReference type="PANTHER" id="PTHR42865:SF1">
    <property type="entry name" value="AEROBIC C4-DICARBOXYLATE TRANSPORT PROTEIN"/>
    <property type="match status" value="1"/>
</dbReference>
<dbReference type="PANTHER" id="PTHR42865">
    <property type="entry name" value="PROTON/GLUTAMATE-ASPARTATE SYMPORTER"/>
    <property type="match status" value="1"/>
</dbReference>
<dbReference type="Pfam" id="PF00375">
    <property type="entry name" value="SDF"/>
    <property type="match status" value="1"/>
</dbReference>
<dbReference type="PRINTS" id="PR00173">
    <property type="entry name" value="EDTRNSPORT"/>
</dbReference>
<dbReference type="SUPFAM" id="SSF118215">
    <property type="entry name" value="Proton glutamate symport protein"/>
    <property type="match status" value="1"/>
</dbReference>
<dbReference type="PROSITE" id="PS00713">
    <property type="entry name" value="NA_DICARBOXYL_SYMP_1"/>
    <property type="match status" value="1"/>
</dbReference>
<dbReference type="PROSITE" id="PS00714">
    <property type="entry name" value="NA_DICARBOXYL_SYMP_2"/>
    <property type="match status" value="1"/>
</dbReference>
<name>DCTA_PECAS</name>
<keyword id="KW-0997">Cell inner membrane</keyword>
<keyword id="KW-1003">Cell membrane</keyword>
<keyword id="KW-0472">Membrane</keyword>
<keyword id="KW-1185">Reference proteome</keyword>
<keyword id="KW-0769">Symport</keyword>
<keyword id="KW-0812">Transmembrane</keyword>
<keyword id="KW-1133">Transmembrane helix</keyword>
<keyword id="KW-0813">Transport</keyword>
<proteinExistence type="inferred from homology"/>
<accession>Q6CYZ1</accession>
<evidence type="ECO:0000255" key="1">
    <source>
        <dbReference type="HAMAP-Rule" id="MF_01300"/>
    </source>
</evidence>
<comment type="function">
    <text evidence="1">Responsible for the transport of dicarboxylates such as succinate, fumarate, and malate from the periplasm across the membrane.</text>
</comment>
<comment type="subcellular location">
    <subcellularLocation>
        <location evidence="1">Cell inner membrane</location>
        <topology evidence="1">Multi-pass membrane protein</topology>
    </subcellularLocation>
</comment>
<comment type="similarity">
    <text evidence="1">Belongs to the dicarboxylate/amino acid:cation symporter (DAACS) (TC 2.A.23) family.</text>
</comment>
<organism>
    <name type="scientific">Pectobacterium atrosepticum (strain SCRI 1043 / ATCC BAA-672)</name>
    <name type="common">Erwinia carotovora subsp. atroseptica</name>
    <dbReference type="NCBI Taxonomy" id="218491"/>
    <lineage>
        <taxon>Bacteria</taxon>
        <taxon>Pseudomonadati</taxon>
        <taxon>Pseudomonadota</taxon>
        <taxon>Gammaproteobacteria</taxon>
        <taxon>Enterobacterales</taxon>
        <taxon>Pectobacteriaceae</taxon>
        <taxon>Pectobacterium</taxon>
    </lineage>
</organism>
<reference key="1">
    <citation type="journal article" date="2004" name="Proc. Natl. Acad. Sci. U.S.A.">
        <title>Genome sequence of the enterobacterial phytopathogen Erwinia carotovora subsp. atroseptica and characterization of virulence factors.</title>
        <authorList>
            <person name="Bell K.S."/>
            <person name="Sebaihia M."/>
            <person name="Pritchard L."/>
            <person name="Holden M.T.G."/>
            <person name="Hyman L.J."/>
            <person name="Holeva M.C."/>
            <person name="Thomson N.R."/>
            <person name="Bentley S.D."/>
            <person name="Churcher L.J.C."/>
            <person name="Mungall K."/>
            <person name="Atkin R."/>
            <person name="Bason N."/>
            <person name="Brooks K."/>
            <person name="Chillingworth T."/>
            <person name="Clark K."/>
            <person name="Doggett J."/>
            <person name="Fraser A."/>
            <person name="Hance Z."/>
            <person name="Hauser H."/>
            <person name="Jagels K."/>
            <person name="Moule S."/>
            <person name="Norbertczak H."/>
            <person name="Ormond D."/>
            <person name="Price C."/>
            <person name="Quail M.A."/>
            <person name="Sanders M."/>
            <person name="Walker D."/>
            <person name="Whitehead S."/>
            <person name="Salmond G.P.C."/>
            <person name="Birch P.R.J."/>
            <person name="Parkhill J."/>
            <person name="Toth I.K."/>
        </authorList>
    </citation>
    <scope>NUCLEOTIDE SEQUENCE [LARGE SCALE GENOMIC DNA]</scope>
    <source>
        <strain>SCRI 1043 / ATCC BAA-672</strain>
    </source>
</reference>